<comment type="function">
    <text evidence="1">One of the primary rRNA binding proteins, it binds directly to 16S rRNA where it helps nucleate assembly of the platform of the 30S subunit by binding and bridging several RNA helices of the 16S rRNA.</text>
</comment>
<comment type="function">
    <text evidence="1">Forms an intersubunit bridge (bridge B4) with the 23S rRNA of the 50S subunit in the ribosome.</text>
</comment>
<comment type="subunit">
    <text evidence="1">Part of the 30S ribosomal subunit. Forms a bridge to the 50S subunit in the 70S ribosome, contacting the 23S rRNA.</text>
</comment>
<comment type="similarity">
    <text evidence="1">Belongs to the universal ribosomal protein uS15 family.</text>
</comment>
<dbReference type="EMBL" id="AM743169">
    <property type="protein sequence ID" value="CAQ46814.1"/>
    <property type="molecule type" value="Genomic_DNA"/>
</dbReference>
<dbReference type="RefSeq" id="WP_005410445.1">
    <property type="nucleotide sequence ID" value="NC_010943.1"/>
</dbReference>
<dbReference type="SMR" id="B2FN87"/>
<dbReference type="EnsemblBacteria" id="CAQ46814">
    <property type="protein sequence ID" value="CAQ46814"/>
    <property type="gene ID" value="Smlt3386"/>
</dbReference>
<dbReference type="GeneID" id="97223723"/>
<dbReference type="KEGG" id="sml:Smlt3386"/>
<dbReference type="eggNOG" id="COG0184">
    <property type="taxonomic scope" value="Bacteria"/>
</dbReference>
<dbReference type="HOGENOM" id="CLU_148518_1_0_6"/>
<dbReference type="Proteomes" id="UP000008840">
    <property type="component" value="Chromosome"/>
</dbReference>
<dbReference type="GO" id="GO:0022627">
    <property type="term" value="C:cytosolic small ribosomal subunit"/>
    <property type="evidence" value="ECO:0007669"/>
    <property type="project" value="TreeGrafter"/>
</dbReference>
<dbReference type="GO" id="GO:0019843">
    <property type="term" value="F:rRNA binding"/>
    <property type="evidence" value="ECO:0007669"/>
    <property type="project" value="UniProtKB-UniRule"/>
</dbReference>
<dbReference type="GO" id="GO:0003735">
    <property type="term" value="F:structural constituent of ribosome"/>
    <property type="evidence" value="ECO:0007669"/>
    <property type="project" value="InterPro"/>
</dbReference>
<dbReference type="GO" id="GO:0006412">
    <property type="term" value="P:translation"/>
    <property type="evidence" value="ECO:0007669"/>
    <property type="project" value="UniProtKB-UniRule"/>
</dbReference>
<dbReference type="CDD" id="cd00353">
    <property type="entry name" value="Ribosomal_S15p_S13e"/>
    <property type="match status" value="1"/>
</dbReference>
<dbReference type="FunFam" id="1.10.287.10:FF:000002">
    <property type="entry name" value="30S ribosomal protein S15"/>
    <property type="match status" value="1"/>
</dbReference>
<dbReference type="Gene3D" id="6.10.250.3130">
    <property type="match status" value="1"/>
</dbReference>
<dbReference type="Gene3D" id="1.10.287.10">
    <property type="entry name" value="S15/NS1, RNA-binding"/>
    <property type="match status" value="1"/>
</dbReference>
<dbReference type="HAMAP" id="MF_01343_B">
    <property type="entry name" value="Ribosomal_uS15_B"/>
    <property type="match status" value="1"/>
</dbReference>
<dbReference type="InterPro" id="IPR000589">
    <property type="entry name" value="Ribosomal_uS15"/>
</dbReference>
<dbReference type="InterPro" id="IPR005290">
    <property type="entry name" value="Ribosomal_uS15_bac-type"/>
</dbReference>
<dbReference type="InterPro" id="IPR009068">
    <property type="entry name" value="uS15_NS1_RNA-bd_sf"/>
</dbReference>
<dbReference type="NCBIfam" id="TIGR00952">
    <property type="entry name" value="S15_bact"/>
    <property type="match status" value="1"/>
</dbReference>
<dbReference type="PANTHER" id="PTHR23321">
    <property type="entry name" value="RIBOSOMAL PROTEIN S15, BACTERIAL AND ORGANELLAR"/>
    <property type="match status" value="1"/>
</dbReference>
<dbReference type="PANTHER" id="PTHR23321:SF26">
    <property type="entry name" value="SMALL RIBOSOMAL SUBUNIT PROTEIN US15M"/>
    <property type="match status" value="1"/>
</dbReference>
<dbReference type="Pfam" id="PF00312">
    <property type="entry name" value="Ribosomal_S15"/>
    <property type="match status" value="1"/>
</dbReference>
<dbReference type="SMART" id="SM01387">
    <property type="entry name" value="Ribosomal_S15"/>
    <property type="match status" value="1"/>
</dbReference>
<dbReference type="SUPFAM" id="SSF47060">
    <property type="entry name" value="S15/NS1 RNA-binding domain"/>
    <property type="match status" value="1"/>
</dbReference>
<dbReference type="PROSITE" id="PS00362">
    <property type="entry name" value="RIBOSOMAL_S15"/>
    <property type="match status" value="1"/>
</dbReference>
<feature type="chain" id="PRO_1000143176" description="Small ribosomal subunit protein uS15">
    <location>
        <begin position="1"/>
        <end position="86"/>
    </location>
</feature>
<feature type="region of interest" description="Disordered" evidence="2">
    <location>
        <begin position="1"/>
        <end position="22"/>
    </location>
</feature>
<feature type="compositionally biased region" description="Basic and acidic residues" evidence="2">
    <location>
        <begin position="7"/>
        <end position="16"/>
    </location>
</feature>
<reference key="1">
    <citation type="journal article" date="2008" name="Genome Biol.">
        <title>The complete genome, comparative and functional analysis of Stenotrophomonas maltophilia reveals an organism heavily shielded by drug resistance determinants.</title>
        <authorList>
            <person name="Crossman L.C."/>
            <person name="Gould V.C."/>
            <person name="Dow J.M."/>
            <person name="Vernikos G.S."/>
            <person name="Okazaki A."/>
            <person name="Sebaihia M."/>
            <person name="Saunders D."/>
            <person name="Arrowsmith C."/>
            <person name="Carver T."/>
            <person name="Peters N."/>
            <person name="Adlem E."/>
            <person name="Kerhornou A."/>
            <person name="Lord A."/>
            <person name="Murphy L."/>
            <person name="Seeger K."/>
            <person name="Squares R."/>
            <person name="Rutter S."/>
            <person name="Quail M.A."/>
            <person name="Rajandream M.A."/>
            <person name="Harris D."/>
            <person name="Churcher C."/>
            <person name="Bentley S.D."/>
            <person name="Parkhill J."/>
            <person name="Thomson N.R."/>
            <person name="Avison M.B."/>
        </authorList>
    </citation>
    <scope>NUCLEOTIDE SEQUENCE [LARGE SCALE GENOMIC DNA]</scope>
    <source>
        <strain>K279a</strain>
    </source>
</reference>
<organism>
    <name type="scientific">Stenotrophomonas maltophilia (strain K279a)</name>
    <dbReference type="NCBI Taxonomy" id="522373"/>
    <lineage>
        <taxon>Bacteria</taxon>
        <taxon>Pseudomonadati</taxon>
        <taxon>Pseudomonadota</taxon>
        <taxon>Gammaproteobacteria</taxon>
        <taxon>Lysobacterales</taxon>
        <taxon>Lysobacteraceae</taxon>
        <taxon>Stenotrophomonas</taxon>
        <taxon>Stenotrophomonas maltophilia group</taxon>
    </lineage>
</organism>
<proteinExistence type="inferred from homology"/>
<protein>
    <recommendedName>
        <fullName evidence="1">Small ribosomal subunit protein uS15</fullName>
    </recommendedName>
    <alternativeName>
        <fullName evidence="3">30S ribosomal protein S15</fullName>
    </alternativeName>
</protein>
<gene>
    <name evidence="1" type="primary">rpsO</name>
    <name type="ordered locus">Smlt3386</name>
</gene>
<sequence>MSIDTQKVIEDNKRSSADTGSPEVQVALLTARIELLTGHFKTHKKDHHSRRGLLQMVNRRRSLLDYLKKKDVERYKALIEKLGLRR</sequence>
<keyword id="KW-1185">Reference proteome</keyword>
<keyword id="KW-0687">Ribonucleoprotein</keyword>
<keyword id="KW-0689">Ribosomal protein</keyword>
<keyword id="KW-0694">RNA-binding</keyword>
<keyword id="KW-0699">rRNA-binding</keyword>
<evidence type="ECO:0000255" key="1">
    <source>
        <dbReference type="HAMAP-Rule" id="MF_01343"/>
    </source>
</evidence>
<evidence type="ECO:0000256" key="2">
    <source>
        <dbReference type="SAM" id="MobiDB-lite"/>
    </source>
</evidence>
<evidence type="ECO:0000305" key="3"/>
<accession>B2FN87</accession>
<name>RS15_STRMK</name>